<comment type="similarity">
    <text evidence="3">In the N-terminal section; belongs to the ChdC family.</text>
</comment>
<evidence type="ECO:0000250" key="1"/>
<evidence type="ECO:0000256" key="2">
    <source>
        <dbReference type="SAM" id="MobiDB-lite"/>
    </source>
</evidence>
<evidence type="ECO:0000305" key="3"/>
<feature type="chain" id="PRO_0000294061" description="Putative heme-binding protein VNG_2021C">
    <location>
        <begin position="1"/>
        <end position="492"/>
    </location>
</feature>
<feature type="domain" description="ABM">
    <location>
        <begin position="402"/>
        <end position="490"/>
    </location>
</feature>
<feature type="region of interest" description="Disordered" evidence="2">
    <location>
        <begin position="253"/>
        <end position="301"/>
    </location>
</feature>
<feature type="compositionally biased region" description="Basic and acidic residues" evidence="2">
    <location>
        <begin position="264"/>
        <end position="301"/>
    </location>
</feature>
<feature type="binding site" description="axial binding residue" evidence="1">
    <location>
        <position position="177"/>
    </location>
    <ligand>
        <name>heme</name>
        <dbReference type="ChEBI" id="CHEBI:30413"/>
    </ligand>
    <ligandPart>
        <name>Fe</name>
        <dbReference type="ChEBI" id="CHEBI:18248"/>
    </ligandPart>
</feature>
<reference key="1">
    <citation type="journal article" date="2000" name="Proc. Natl. Acad. Sci. U.S.A.">
        <title>Genome sequence of Halobacterium species NRC-1.</title>
        <authorList>
            <person name="Ng W.V."/>
            <person name="Kennedy S.P."/>
            <person name="Mahairas G.G."/>
            <person name="Berquist B."/>
            <person name="Pan M."/>
            <person name="Shukla H.D."/>
            <person name="Lasky S.R."/>
            <person name="Baliga N.S."/>
            <person name="Thorsson V."/>
            <person name="Sbrogna J."/>
            <person name="Swartzell S."/>
            <person name="Weir D."/>
            <person name="Hall J."/>
            <person name="Dahl T.A."/>
            <person name="Welti R."/>
            <person name="Goo Y.A."/>
            <person name="Leithauser B."/>
            <person name="Keller K."/>
            <person name="Cruz R."/>
            <person name="Danson M.J."/>
            <person name="Hough D.W."/>
            <person name="Maddocks D.G."/>
            <person name="Jablonski P.E."/>
            <person name="Krebs M.P."/>
            <person name="Angevine C.M."/>
            <person name="Dale H."/>
            <person name="Isenbarger T.A."/>
            <person name="Peck R.F."/>
            <person name="Pohlschroder M."/>
            <person name="Spudich J.L."/>
            <person name="Jung K.-H."/>
            <person name="Alam M."/>
            <person name="Freitas T."/>
            <person name="Hou S."/>
            <person name="Daniels C.J."/>
            <person name="Dennis P.P."/>
            <person name="Omer A.D."/>
            <person name="Ebhardt H."/>
            <person name="Lowe T.M."/>
            <person name="Liang P."/>
            <person name="Riley M."/>
            <person name="Hood L."/>
            <person name="DasSarma S."/>
        </authorList>
    </citation>
    <scope>NUCLEOTIDE SEQUENCE [LARGE SCALE GENOMIC DNA]</scope>
    <source>
        <strain>ATCC 700922 / JCM 11081 / NRC-1</strain>
    </source>
</reference>
<gene>
    <name type="ordered locus">VNG_2021C</name>
</gene>
<name>Y2021_HALSA</name>
<keyword id="KW-0349">Heme</keyword>
<keyword id="KW-0408">Iron</keyword>
<keyword id="KW-0479">Metal-binding</keyword>
<keyword id="KW-1185">Reference proteome</keyword>
<proteinExistence type="inferred from homology"/>
<organism>
    <name type="scientific">Halobacterium salinarum (strain ATCC 700922 / JCM 11081 / NRC-1)</name>
    <name type="common">Halobacterium halobium</name>
    <dbReference type="NCBI Taxonomy" id="64091"/>
    <lineage>
        <taxon>Archaea</taxon>
        <taxon>Methanobacteriati</taxon>
        <taxon>Methanobacteriota</taxon>
        <taxon>Stenosarchaea group</taxon>
        <taxon>Halobacteria</taxon>
        <taxon>Halobacteriales</taxon>
        <taxon>Halobacteriaceae</taxon>
        <taxon>Halobacterium</taxon>
        <taxon>Halobacterium salinarum NRC-34001</taxon>
    </lineage>
</organism>
<sequence>MADAPPTDEGWFVLHDCYTVDWDAWRDAPERDRTAALDDAASFLADREALADADEGESGVFSITGQKADLLFVHFRESLDELDRIQRAFEQTAFAEYTERAHSYVSVVEISGYTAPDYFEDPDSVDDGLRQYFESKLTPEIPDDTYVSFYPMSKRRQPEQNWYDLPIEERAEMMDVHGDLGKQYAGKVSQVIASSVGLDDMEWGVTLFADDLTDIKDIVYEMRFDEVSAKYGAFGDFFVGRRFPPADLPAFMAGERVPAPEGGADAHGEGERTHHHGDSDHHDGDDGEQHHHSTGDEADDGIRGELADEDIYAGQPHGEDVYATVLYSEAGADDLFEEVEGLRGNFEHYDTHVKTAVYDGHEADRRAVVSIWDTASAADTAAGFLADLPEVVERAGEESGFGTMGMFYETKPEHTAEFVEKFDTVAGVLADMDGHFDTDLMVNVENDDDMFIASQWRSQEDAMAFFRSDDFGDTVDWGRDVLADRPRHVFLA</sequence>
<dbReference type="EMBL" id="AE004437">
    <property type="protein sequence ID" value="AAG20186.1"/>
    <property type="molecule type" value="Genomic_DNA"/>
</dbReference>
<dbReference type="PIR" id="F84352">
    <property type="entry name" value="F84352"/>
</dbReference>
<dbReference type="RefSeq" id="WP_010903487.1">
    <property type="nucleotide sequence ID" value="NC_002607.1"/>
</dbReference>
<dbReference type="SMR" id="Q9HNN4"/>
<dbReference type="STRING" id="64091.VNG_2021C"/>
<dbReference type="PaxDb" id="64091-VNG_2021C"/>
<dbReference type="KEGG" id="hal:VNG_2021C"/>
<dbReference type="PATRIC" id="fig|64091.14.peg.1543"/>
<dbReference type="HOGENOM" id="CLU_470618_0_0_2"/>
<dbReference type="InParanoid" id="Q9HNN4"/>
<dbReference type="OrthoDB" id="8690at2157"/>
<dbReference type="Proteomes" id="UP000000554">
    <property type="component" value="Chromosome"/>
</dbReference>
<dbReference type="GO" id="GO:0020037">
    <property type="term" value="F:heme binding"/>
    <property type="evidence" value="ECO:0007669"/>
    <property type="project" value="InterPro"/>
</dbReference>
<dbReference type="GO" id="GO:0046872">
    <property type="term" value="F:metal ion binding"/>
    <property type="evidence" value="ECO:0007669"/>
    <property type="project" value="UniProtKB-KW"/>
</dbReference>
<dbReference type="GO" id="GO:0016491">
    <property type="term" value="F:oxidoreductase activity"/>
    <property type="evidence" value="ECO:0007669"/>
    <property type="project" value="InterPro"/>
</dbReference>
<dbReference type="Gene3D" id="3.30.70.100">
    <property type="match status" value="1"/>
</dbReference>
<dbReference type="Gene3D" id="3.30.70.1030">
    <property type="entry name" value="Apc35880, domain 1"/>
    <property type="match status" value="2"/>
</dbReference>
<dbReference type="InterPro" id="IPR007138">
    <property type="entry name" value="ABM_dom"/>
</dbReference>
<dbReference type="InterPro" id="IPR010644">
    <property type="entry name" value="ChdC/CLD"/>
</dbReference>
<dbReference type="InterPro" id="IPR011008">
    <property type="entry name" value="Dimeric_a/b-barrel"/>
</dbReference>
<dbReference type="NCBIfam" id="NF007124">
    <property type="entry name" value="PRK09565.1"/>
    <property type="match status" value="2"/>
</dbReference>
<dbReference type="NCBIfam" id="NF008913">
    <property type="entry name" value="PRK12276.1"/>
    <property type="match status" value="1"/>
</dbReference>
<dbReference type="PANTHER" id="PTHR36843:SF1">
    <property type="entry name" value="COPROHEME DECARBOXYLASE"/>
    <property type="match status" value="1"/>
</dbReference>
<dbReference type="PANTHER" id="PTHR36843">
    <property type="entry name" value="HEME-DEPENDENT PEROXIDASE YWFI-RELATED"/>
    <property type="match status" value="1"/>
</dbReference>
<dbReference type="Pfam" id="PF03992">
    <property type="entry name" value="ABM"/>
    <property type="match status" value="1"/>
</dbReference>
<dbReference type="Pfam" id="PF06778">
    <property type="entry name" value="Chlor_dismutase"/>
    <property type="match status" value="1"/>
</dbReference>
<dbReference type="SUPFAM" id="SSF54909">
    <property type="entry name" value="Dimeric alpha+beta barrel"/>
    <property type="match status" value="2"/>
</dbReference>
<dbReference type="PROSITE" id="PS51725">
    <property type="entry name" value="ABM"/>
    <property type="match status" value="1"/>
</dbReference>
<accession>Q9HNN4</accession>
<protein>
    <recommendedName>
        <fullName>Putative heme-binding protein VNG_2021C</fullName>
    </recommendedName>
</protein>